<keyword id="KW-0687">Ribonucleoprotein</keyword>
<keyword id="KW-0689">Ribosomal protein</keyword>
<sequence length="195" mass="21022">MPKPTKGPRLGGSSSHQKALLANLATSLFEHGRIKTTEPKARALRPYAEKLITHAKKGELHNRREVMKKIRDKDVVHTLFAEIGPFFADREGGYTRIIKVEPRKGDNAPMAVIELVREKTVTSEANRARRVGASKQTAPVAAAAAPQAAVEPEATEGPDADDSSALPEAEDTTASEASRSTETDDPTQDSDADKS</sequence>
<evidence type="ECO:0000255" key="1">
    <source>
        <dbReference type="HAMAP-Rule" id="MF_01368"/>
    </source>
</evidence>
<evidence type="ECO:0000256" key="2">
    <source>
        <dbReference type="SAM" id="MobiDB-lite"/>
    </source>
</evidence>
<evidence type="ECO:0000305" key="3"/>
<accession>A3PVL9</accession>
<organism>
    <name type="scientific">Mycobacterium sp. (strain JLS)</name>
    <dbReference type="NCBI Taxonomy" id="164757"/>
    <lineage>
        <taxon>Bacteria</taxon>
        <taxon>Bacillati</taxon>
        <taxon>Actinomycetota</taxon>
        <taxon>Actinomycetes</taxon>
        <taxon>Mycobacteriales</taxon>
        <taxon>Mycobacteriaceae</taxon>
        <taxon>Mycobacterium</taxon>
    </lineage>
</organism>
<reference key="1">
    <citation type="submission" date="2007-02" db="EMBL/GenBank/DDBJ databases">
        <title>Complete sequence of Mycobacterium sp. JLS.</title>
        <authorList>
            <consortium name="US DOE Joint Genome Institute"/>
            <person name="Copeland A."/>
            <person name="Lucas S."/>
            <person name="Lapidus A."/>
            <person name="Barry K."/>
            <person name="Detter J.C."/>
            <person name="Glavina del Rio T."/>
            <person name="Hammon N."/>
            <person name="Israni S."/>
            <person name="Dalin E."/>
            <person name="Tice H."/>
            <person name="Pitluck S."/>
            <person name="Chain P."/>
            <person name="Malfatti S."/>
            <person name="Shin M."/>
            <person name="Vergez L."/>
            <person name="Schmutz J."/>
            <person name="Larimer F."/>
            <person name="Land M."/>
            <person name="Hauser L."/>
            <person name="Kyrpides N."/>
            <person name="Mikhailova N."/>
            <person name="Miller C.D."/>
            <person name="Anderson A.J."/>
            <person name="Sims R.C."/>
            <person name="Richardson P."/>
        </authorList>
    </citation>
    <scope>NUCLEOTIDE SEQUENCE [LARGE SCALE GENOMIC DNA]</scope>
    <source>
        <strain>JLS</strain>
    </source>
</reference>
<comment type="subunit">
    <text evidence="1">Part of the 50S ribosomal subunit. Contacts protein L32.</text>
</comment>
<comment type="similarity">
    <text evidence="1">Belongs to the bacterial ribosomal protein bL17 family.</text>
</comment>
<feature type="chain" id="PRO_1000055883" description="Large ribosomal subunit protein bL17">
    <location>
        <begin position="1"/>
        <end position="195"/>
    </location>
</feature>
<feature type="region of interest" description="Disordered" evidence="2">
    <location>
        <begin position="125"/>
        <end position="195"/>
    </location>
</feature>
<feature type="compositionally biased region" description="Low complexity" evidence="2">
    <location>
        <begin position="136"/>
        <end position="152"/>
    </location>
</feature>
<feature type="compositionally biased region" description="Acidic residues" evidence="2">
    <location>
        <begin position="153"/>
        <end position="173"/>
    </location>
</feature>
<feature type="compositionally biased region" description="Acidic residues" evidence="2">
    <location>
        <begin position="183"/>
        <end position="195"/>
    </location>
</feature>
<gene>
    <name evidence="1" type="primary">rplQ</name>
    <name type="ordered locus">Mjls_1143</name>
</gene>
<dbReference type="EMBL" id="CP000580">
    <property type="protein sequence ID" value="ABN96946.1"/>
    <property type="molecule type" value="Genomic_DNA"/>
</dbReference>
<dbReference type="SMR" id="A3PVL9"/>
<dbReference type="KEGG" id="mjl:Mjls_1143"/>
<dbReference type="HOGENOM" id="CLU_074407_0_0_11"/>
<dbReference type="BioCyc" id="MSP164757:G1G8C-1155-MONOMER"/>
<dbReference type="GO" id="GO:0022625">
    <property type="term" value="C:cytosolic large ribosomal subunit"/>
    <property type="evidence" value="ECO:0007669"/>
    <property type="project" value="TreeGrafter"/>
</dbReference>
<dbReference type="GO" id="GO:0003735">
    <property type="term" value="F:structural constituent of ribosome"/>
    <property type="evidence" value="ECO:0007669"/>
    <property type="project" value="InterPro"/>
</dbReference>
<dbReference type="GO" id="GO:0006412">
    <property type="term" value="P:translation"/>
    <property type="evidence" value="ECO:0007669"/>
    <property type="project" value="UniProtKB-UniRule"/>
</dbReference>
<dbReference type="FunFam" id="3.90.1030.10:FF:000001">
    <property type="entry name" value="50S ribosomal protein L17"/>
    <property type="match status" value="1"/>
</dbReference>
<dbReference type="Gene3D" id="3.90.1030.10">
    <property type="entry name" value="Ribosomal protein L17"/>
    <property type="match status" value="1"/>
</dbReference>
<dbReference type="HAMAP" id="MF_01368">
    <property type="entry name" value="Ribosomal_bL17"/>
    <property type="match status" value="1"/>
</dbReference>
<dbReference type="InterPro" id="IPR000456">
    <property type="entry name" value="Ribosomal_bL17"/>
</dbReference>
<dbReference type="InterPro" id="IPR047859">
    <property type="entry name" value="Ribosomal_bL17_CS"/>
</dbReference>
<dbReference type="InterPro" id="IPR036373">
    <property type="entry name" value="Ribosomal_bL17_sf"/>
</dbReference>
<dbReference type="NCBIfam" id="TIGR00059">
    <property type="entry name" value="L17"/>
    <property type="match status" value="1"/>
</dbReference>
<dbReference type="PANTHER" id="PTHR14413:SF16">
    <property type="entry name" value="LARGE RIBOSOMAL SUBUNIT PROTEIN BL17M"/>
    <property type="match status" value="1"/>
</dbReference>
<dbReference type="PANTHER" id="PTHR14413">
    <property type="entry name" value="RIBOSOMAL PROTEIN L17"/>
    <property type="match status" value="1"/>
</dbReference>
<dbReference type="Pfam" id="PF01196">
    <property type="entry name" value="Ribosomal_L17"/>
    <property type="match status" value="1"/>
</dbReference>
<dbReference type="SUPFAM" id="SSF64263">
    <property type="entry name" value="Prokaryotic ribosomal protein L17"/>
    <property type="match status" value="1"/>
</dbReference>
<dbReference type="PROSITE" id="PS01167">
    <property type="entry name" value="RIBOSOMAL_L17"/>
    <property type="match status" value="1"/>
</dbReference>
<name>RL17_MYCSJ</name>
<protein>
    <recommendedName>
        <fullName evidence="1">Large ribosomal subunit protein bL17</fullName>
    </recommendedName>
    <alternativeName>
        <fullName evidence="3">50S ribosomal protein L17</fullName>
    </alternativeName>
</protein>
<proteinExistence type="inferred from homology"/>